<sequence>MFRIVNGEDYSPEVQQRNSLDFGKAPSLLWTDNGGSNDRCETGGNGRESGQDRVKRPMNAFIVWSRDQRRKVALENPQMQNSEISKRLGYDWKMLTEAEKQPFFEEAQRLRAMHRDKYPGYKYRPRRKAKRPQKLLPADSSVLCSRMHIEETLYPFTYKDGCAKATRSRMESRLSHSQPTNTTSSLLPQEHRSSWTSLSHNRVT</sequence>
<proteinExistence type="inferred from homology"/>
<keyword id="KW-0007">Acetylation</keyword>
<keyword id="KW-0010">Activator</keyword>
<keyword id="KW-0112">Calmodulin-binding</keyword>
<keyword id="KW-0963">Cytoplasm</keyword>
<keyword id="KW-0221">Differentiation</keyword>
<keyword id="KW-0238">DNA-binding</keyword>
<keyword id="KW-0539">Nucleus</keyword>
<keyword id="KW-1185">Reference proteome</keyword>
<keyword id="KW-0678">Repressor</keyword>
<keyword id="KW-0726">Sexual differentiation</keyword>
<keyword id="KW-0804">Transcription</keyword>
<keyword id="KW-0805">Transcription regulation</keyword>
<comment type="function">
    <text evidence="1 2">Transcriptional regulator that controls a genetic switch in male development. It is necessary and sufficient for initiating male sex determination by directing the development of supporting cell precursors (pre-Sertoli cells) as Sertoli rather than granulosa cells. Involved in different aspects of gene regulation including promoter activation or repression. Binds to the DNA consensus sequence 5'-[AT]AACAA[AT]-3'. SRY HMG box recognizes DNA by partial intercalation in the minor groove and promotes DNA bending. Also involved in pre-mRNA splicing (By similarity). In male adult brain involved in the maintenance of motor functions of dopaminergic neurons (By similarity).</text>
</comment>
<comment type="subunit">
    <text evidence="2">Interacts with CALM, EP300, HDAC3, KPNB1, ZNF208 isoform KRAB-O, PARP1, SLC9A3R2 and WT1. The interaction with EP300 modulates its DNA-binding activity. The interaction with KPNB1 is sensitive to dissociation by Ran in the GTP-bound form. Interaction with PARP1 impaired its DNA-binding activity.</text>
</comment>
<comment type="subcellular location">
    <subcellularLocation>
        <location evidence="2">Nucleus speckle</location>
    </subcellularLocation>
    <subcellularLocation>
        <location evidence="2">Cytoplasm</location>
    </subcellularLocation>
    <subcellularLocation>
        <location evidence="2">Nucleus</location>
    </subcellularLocation>
</comment>
<comment type="PTM">
    <text evidence="2">Acetylation of Lys-130 contributes to its nuclear localization and enhances its interaction with KPNB1. Deacetylated by HDAC3.</text>
</comment>
<comment type="similarity">
    <text evidence="5">Belongs to the SRY family.</text>
</comment>
<comment type="online information" name="Protein Spotlight">
    <link uri="https://www.proteinspotlight.org/back_issues/080"/>
    <text>The tenuous nature of sex - Issue 80 of March 2007</text>
</comment>
<feature type="chain" id="PRO_0000048640" description="Sex-determining region Y protein">
    <location>
        <begin position="1"/>
        <end position="204"/>
    </location>
</feature>
<feature type="DNA-binding region" description="HMG box" evidence="3">
    <location>
        <begin position="54"/>
        <end position="122"/>
    </location>
</feature>
<feature type="region of interest" description="Disordered" evidence="4">
    <location>
        <begin position="25"/>
        <end position="52"/>
    </location>
</feature>
<feature type="region of interest" description="Disordered" evidence="4">
    <location>
        <begin position="169"/>
        <end position="204"/>
    </location>
</feature>
<feature type="compositionally biased region" description="Polar residues" evidence="4">
    <location>
        <begin position="175"/>
        <end position="187"/>
    </location>
</feature>
<feature type="compositionally biased region" description="Polar residues" evidence="4">
    <location>
        <begin position="194"/>
        <end position="204"/>
    </location>
</feature>
<dbReference type="EMBL" id="AB108511">
    <property type="protein sequence ID" value="BAC75643.1"/>
    <property type="molecule type" value="Genomic_DNA"/>
</dbReference>
<dbReference type="SMR" id="Q864R0"/>
<dbReference type="Proteomes" id="UP000694857">
    <property type="component" value="Unplaced"/>
</dbReference>
<dbReference type="GO" id="GO:0005737">
    <property type="term" value="C:cytoplasm"/>
    <property type="evidence" value="ECO:0007669"/>
    <property type="project" value="UniProtKB-SubCell"/>
</dbReference>
<dbReference type="GO" id="GO:0016607">
    <property type="term" value="C:nuclear speck"/>
    <property type="evidence" value="ECO:0007669"/>
    <property type="project" value="UniProtKB-SubCell"/>
</dbReference>
<dbReference type="GO" id="GO:0005634">
    <property type="term" value="C:nucleus"/>
    <property type="evidence" value="ECO:0000250"/>
    <property type="project" value="UniProtKB"/>
</dbReference>
<dbReference type="GO" id="GO:0005516">
    <property type="term" value="F:calmodulin binding"/>
    <property type="evidence" value="ECO:0007669"/>
    <property type="project" value="UniProtKB-KW"/>
</dbReference>
<dbReference type="GO" id="GO:0001228">
    <property type="term" value="F:DNA-binding transcription activator activity, RNA polymerase II-specific"/>
    <property type="evidence" value="ECO:0007669"/>
    <property type="project" value="TreeGrafter"/>
</dbReference>
<dbReference type="GO" id="GO:0000978">
    <property type="term" value="F:RNA polymerase II cis-regulatory region sequence-specific DNA binding"/>
    <property type="evidence" value="ECO:0007669"/>
    <property type="project" value="TreeGrafter"/>
</dbReference>
<dbReference type="GO" id="GO:0030154">
    <property type="term" value="P:cell differentiation"/>
    <property type="evidence" value="ECO:0007669"/>
    <property type="project" value="UniProtKB-KW"/>
</dbReference>
<dbReference type="GO" id="GO:0030238">
    <property type="term" value="P:male sex determination"/>
    <property type="evidence" value="ECO:0007669"/>
    <property type="project" value="InterPro"/>
</dbReference>
<dbReference type="GO" id="GO:0007548">
    <property type="term" value="P:sex differentiation"/>
    <property type="evidence" value="ECO:0007669"/>
    <property type="project" value="UniProtKB-KW"/>
</dbReference>
<dbReference type="CDD" id="cd22034">
    <property type="entry name" value="HMG-box_SoxA_SRY"/>
    <property type="match status" value="1"/>
</dbReference>
<dbReference type="FunFam" id="1.10.30.10:FF:000002">
    <property type="entry name" value="transcription factor Sox-2"/>
    <property type="match status" value="1"/>
</dbReference>
<dbReference type="Gene3D" id="1.10.30.10">
    <property type="entry name" value="High mobility group box domain"/>
    <property type="match status" value="1"/>
</dbReference>
<dbReference type="InterPro" id="IPR009071">
    <property type="entry name" value="HMG_box_dom"/>
</dbReference>
<dbReference type="InterPro" id="IPR036910">
    <property type="entry name" value="HMG_box_dom_sf"/>
</dbReference>
<dbReference type="InterPro" id="IPR017253">
    <property type="entry name" value="SRY"/>
</dbReference>
<dbReference type="InterPro" id="IPR050140">
    <property type="entry name" value="SRY-related_HMG-box_TF-like"/>
</dbReference>
<dbReference type="PANTHER" id="PTHR10270:SF161">
    <property type="entry name" value="SEX-DETERMINING REGION Y PROTEIN"/>
    <property type="match status" value="1"/>
</dbReference>
<dbReference type="PANTHER" id="PTHR10270">
    <property type="entry name" value="SOX TRANSCRIPTION FACTOR"/>
    <property type="match status" value="1"/>
</dbReference>
<dbReference type="Pfam" id="PF00505">
    <property type="entry name" value="HMG_box"/>
    <property type="match status" value="1"/>
</dbReference>
<dbReference type="PIRSF" id="PIRSF037653">
    <property type="entry name" value="SRY"/>
    <property type="match status" value="1"/>
</dbReference>
<dbReference type="SMART" id="SM00398">
    <property type="entry name" value="HMG"/>
    <property type="match status" value="1"/>
</dbReference>
<dbReference type="SUPFAM" id="SSF47095">
    <property type="entry name" value="HMG-box"/>
    <property type="match status" value="1"/>
</dbReference>
<dbReference type="PROSITE" id="PS50118">
    <property type="entry name" value="HMG_BOX_2"/>
    <property type="match status" value="1"/>
</dbReference>
<gene>
    <name type="primary">SRY</name>
    <name type="synonym">TDF</name>
</gene>
<reference key="1">
    <citation type="journal article" date="2003" name="Mammal Study">
        <title>SRY gene structure and phylogeny in the cetacean species.</title>
        <authorList>
            <person name="Nishida S."/>
            <person name="Pastene L.A."/>
            <person name="Goto M."/>
            <person name="Koike H."/>
        </authorList>
    </citation>
    <scope>NUCLEOTIDE SEQUENCE [GENOMIC DNA]</scope>
</reference>
<evidence type="ECO:0000250" key="1">
    <source>
        <dbReference type="UniProtKB" id="P36394"/>
    </source>
</evidence>
<evidence type="ECO:0000250" key="2">
    <source>
        <dbReference type="UniProtKB" id="Q05066"/>
    </source>
</evidence>
<evidence type="ECO:0000255" key="3">
    <source>
        <dbReference type="PROSITE-ProRule" id="PRU00267"/>
    </source>
</evidence>
<evidence type="ECO:0000256" key="4">
    <source>
        <dbReference type="SAM" id="MobiDB-lite"/>
    </source>
</evidence>
<evidence type="ECO:0000305" key="5"/>
<name>SRY_BALMU</name>
<protein>
    <recommendedName>
        <fullName>Sex-determining region Y protein</fullName>
    </recommendedName>
    <alternativeName>
        <fullName>Testis-determining factor</fullName>
    </alternativeName>
</protein>
<organism>
    <name type="scientific">Balaenoptera musculus</name>
    <name type="common">Blue whale</name>
    <dbReference type="NCBI Taxonomy" id="9771"/>
    <lineage>
        <taxon>Eukaryota</taxon>
        <taxon>Metazoa</taxon>
        <taxon>Chordata</taxon>
        <taxon>Craniata</taxon>
        <taxon>Vertebrata</taxon>
        <taxon>Euteleostomi</taxon>
        <taxon>Mammalia</taxon>
        <taxon>Eutheria</taxon>
        <taxon>Laurasiatheria</taxon>
        <taxon>Artiodactyla</taxon>
        <taxon>Whippomorpha</taxon>
        <taxon>Cetacea</taxon>
        <taxon>Mysticeti</taxon>
        <taxon>Balaenopteridae</taxon>
        <taxon>Balaenoptera</taxon>
    </lineage>
</organism>
<accession>Q864R0</accession>